<comment type="subcellular location">
    <subcellularLocation>
        <location>Plastid</location>
        <location>Cyanelle</location>
    </subcellularLocation>
</comment>
<proteinExistence type="predicted"/>
<protein>
    <recommendedName>
        <fullName>Uncharacterized 24.3 kDa protein in hemA-psbN intergenic region</fullName>
    </recommendedName>
    <alternativeName>
        <fullName>ORF206</fullName>
    </alternativeName>
</protein>
<dbReference type="EMBL" id="U30821">
    <property type="protein sequence ID" value="AAA81195.1"/>
    <property type="molecule type" value="Genomic_DNA"/>
</dbReference>
<dbReference type="PIR" id="T06852">
    <property type="entry name" value="T06852"/>
</dbReference>
<dbReference type="RefSeq" id="NP_043164.1">
    <property type="nucleotide sequence ID" value="NC_001675.1"/>
</dbReference>
<dbReference type="SMR" id="P48323"/>
<dbReference type="GeneID" id="801614"/>
<dbReference type="GO" id="GO:0009842">
    <property type="term" value="C:cyanelle"/>
    <property type="evidence" value="ECO:0007669"/>
    <property type="project" value="UniProtKB-SubCell"/>
</dbReference>
<dbReference type="GO" id="GO:0006310">
    <property type="term" value="P:DNA recombination"/>
    <property type="evidence" value="ECO:0007669"/>
    <property type="project" value="InterPro"/>
</dbReference>
<dbReference type="GO" id="GO:0006281">
    <property type="term" value="P:DNA repair"/>
    <property type="evidence" value="ECO:0007669"/>
    <property type="project" value="InterPro"/>
</dbReference>
<dbReference type="Gene3D" id="1.20.1440.120">
    <property type="entry name" value="Recombination protein O, C-terminal domain"/>
    <property type="match status" value="1"/>
</dbReference>
<dbReference type="InterPro" id="IPR037278">
    <property type="entry name" value="ARFGAP/RecO"/>
</dbReference>
<dbReference type="InterPro" id="IPR003717">
    <property type="entry name" value="RecO"/>
</dbReference>
<dbReference type="InterPro" id="IPR042242">
    <property type="entry name" value="RecO_C"/>
</dbReference>
<dbReference type="Pfam" id="PF02565">
    <property type="entry name" value="RecO_C"/>
    <property type="match status" value="1"/>
</dbReference>
<dbReference type="SUPFAM" id="SSF57863">
    <property type="entry name" value="ArfGap/RecO-like zinc finger"/>
    <property type="match status" value="1"/>
</dbReference>
<reference key="1">
    <citation type="journal article" date="1995" name="Plant Mol. Biol. Rep.">
        <title>Nucleotide sequence of the cyanelle DNA from Cyanophora paradoxa.</title>
        <authorList>
            <person name="Stirewalt V.L."/>
            <person name="Michalowski C.B."/>
            <person name="Loeffelhardt W."/>
            <person name="Bohnert H.J."/>
            <person name="Bryant D.A."/>
        </authorList>
    </citation>
    <scope>NUCLEOTIDE SEQUENCE [LARGE SCALE GENOMIC DNA]</scope>
    <source>
        <strain>UTEX LB 555 / Pringsheim</strain>
    </source>
</reference>
<reference key="2">
    <citation type="book" date="1997" name="Eukaryotism and symbiosis">
        <title>The complete sequence of the cyanelle genome of Cyanophora paradoxa: the genetic complexity of a primitive plastid.</title>
        <editorList>
            <person name="Schenk H.E.A."/>
            <person name="Herrmann R."/>
            <person name="Jeon K.W."/>
            <person name="Mueller N.E."/>
            <person name="Schwemmler W."/>
        </editorList>
        <authorList>
            <person name="Loeffelhardt W."/>
            <person name="Stirewalt V.L."/>
            <person name="Michalowski C.B."/>
            <person name="Annarella M."/>
            <person name="Farley J.Y."/>
            <person name="Schluchter W.M."/>
            <person name="Chung S."/>
            <person name="Newmann-Spallart C."/>
            <person name="Steiner J.M."/>
            <person name="Jakowitsch J."/>
            <person name="Bohnert H.J."/>
            <person name="Bryant D.A."/>
        </authorList>
    </citation>
    <scope>NUCLEOTIDE SEQUENCE [LARGE SCALE GENOMIC DNA]</scope>
    <source>
        <strain>UTEX LB 555 / Pringsheim</strain>
    </source>
</reference>
<feature type="chain" id="PRO_0000217427" description="Uncharacterized 24.3 kDa protein in hemA-psbN intergenic region">
    <location>
        <begin position="1"/>
        <end position="206"/>
    </location>
</feature>
<organism>
    <name type="scientific">Cyanophora paradoxa</name>
    <dbReference type="NCBI Taxonomy" id="2762"/>
    <lineage>
        <taxon>Eukaryota</taxon>
        <taxon>Glaucocystophyceae</taxon>
        <taxon>Cyanophoraceae</taxon>
        <taxon>Cyanophora</taxon>
    </lineage>
</organism>
<sequence>MLFASNAIILKIKQRNSNSYIYTLYTYEEGLKEVIIFTNQKILCSNLKLYRIYFVLFKKGAPWDQIQRLYPLFFYPKIEQNPLKMIVLEYLSELIIYQLYSPENCTFIYFIFHYTLFQLNICSNNMILPIFISSLYSLLKFLGWEPELSNCVYTGESLNSENSNLTDSKIGFSASYGGIVKLNVLPKQEYIGFFNKDELFIFTNDN</sequence>
<geneLocation type="cyanelle"/>
<keyword id="KW-0194">Cyanelle</keyword>
<keyword id="KW-0934">Plastid</keyword>
<accession>P48323</accession>
<name>YCX1_CYAPA</name>